<sequence>MKIYLVGGAVRDALLGQPAGDRDWVVVGADQARMEAQGFKPVGKDFPVFLHPRSGEEYALARTERKSGRGYRGFVVDADPLVTLEEDLLRRDFTINAIARDEDTGEFFDPYNGARDLQARVLRHVGPAFVEDPVRVLRAARFMARLAPLGFTIAPETAALMREMAASGELDSLVPERVWQELRRALTCAQPSAFLRTLHDTDGLRAILPEIDALYGVPQRAQFHPEVDTGIHQEMVSDMAARIAPGDALVGFAALTHDLGKALTPPEQWPRHIMHEQRGVAPLQALCERLKVPQDYRQLAVIACREHLNVHRLPELRDRTVHELLVRCDAFRRPERIAQLALVCEADKRGRLGSEEAAYPQGAELKRLHAAASAINARDLAADGLQGPQIGEALTKARIAAITAARKTSA</sequence>
<dbReference type="EC" id="2.7.7.72" evidence="1"/>
<dbReference type="EC" id="3.1.3.-" evidence="1"/>
<dbReference type="EC" id="3.1.4.-" evidence="1"/>
<dbReference type="EMBL" id="AP008229">
    <property type="protein sequence ID" value="BAE70436.1"/>
    <property type="molecule type" value="Genomic_DNA"/>
</dbReference>
<dbReference type="RefSeq" id="WP_011260292.1">
    <property type="nucleotide sequence ID" value="NC_007705.1"/>
</dbReference>
<dbReference type="SMR" id="Q2NZ41"/>
<dbReference type="KEGG" id="xom:XOO3681"/>
<dbReference type="PATRIC" id="fig|291331.8.peg.4321"/>
<dbReference type="HOGENOM" id="CLU_015961_1_1_6"/>
<dbReference type="GO" id="GO:0005524">
    <property type="term" value="F:ATP binding"/>
    <property type="evidence" value="ECO:0007669"/>
    <property type="project" value="UniProtKB-UniRule"/>
</dbReference>
<dbReference type="GO" id="GO:0004810">
    <property type="term" value="F:CCA tRNA nucleotidyltransferase activity"/>
    <property type="evidence" value="ECO:0007669"/>
    <property type="project" value="UniProtKB-UniRule"/>
</dbReference>
<dbReference type="GO" id="GO:0004112">
    <property type="term" value="F:cyclic-nucleotide phosphodiesterase activity"/>
    <property type="evidence" value="ECO:0007669"/>
    <property type="project" value="UniProtKB-UniRule"/>
</dbReference>
<dbReference type="GO" id="GO:0000287">
    <property type="term" value="F:magnesium ion binding"/>
    <property type="evidence" value="ECO:0007669"/>
    <property type="project" value="UniProtKB-UniRule"/>
</dbReference>
<dbReference type="GO" id="GO:0016791">
    <property type="term" value="F:phosphatase activity"/>
    <property type="evidence" value="ECO:0007669"/>
    <property type="project" value="UniProtKB-UniRule"/>
</dbReference>
<dbReference type="GO" id="GO:0000049">
    <property type="term" value="F:tRNA binding"/>
    <property type="evidence" value="ECO:0007669"/>
    <property type="project" value="UniProtKB-UniRule"/>
</dbReference>
<dbReference type="GO" id="GO:0042245">
    <property type="term" value="P:RNA repair"/>
    <property type="evidence" value="ECO:0007669"/>
    <property type="project" value="UniProtKB-KW"/>
</dbReference>
<dbReference type="GO" id="GO:0001680">
    <property type="term" value="P:tRNA 3'-terminal CCA addition"/>
    <property type="evidence" value="ECO:0007669"/>
    <property type="project" value="UniProtKB-UniRule"/>
</dbReference>
<dbReference type="CDD" id="cd05398">
    <property type="entry name" value="NT_ClassII-CCAase"/>
    <property type="match status" value="1"/>
</dbReference>
<dbReference type="Gene3D" id="3.30.460.10">
    <property type="entry name" value="Beta Polymerase, domain 2"/>
    <property type="match status" value="1"/>
</dbReference>
<dbReference type="Gene3D" id="1.10.3090.10">
    <property type="entry name" value="cca-adding enzyme, domain 2"/>
    <property type="match status" value="1"/>
</dbReference>
<dbReference type="HAMAP" id="MF_01261">
    <property type="entry name" value="CCA_bact_type1"/>
    <property type="match status" value="1"/>
</dbReference>
<dbReference type="InterPro" id="IPR012006">
    <property type="entry name" value="CCA_bact"/>
</dbReference>
<dbReference type="InterPro" id="IPR006674">
    <property type="entry name" value="HD_domain"/>
</dbReference>
<dbReference type="InterPro" id="IPR043519">
    <property type="entry name" value="NT_sf"/>
</dbReference>
<dbReference type="InterPro" id="IPR002646">
    <property type="entry name" value="PolA_pol_head_dom"/>
</dbReference>
<dbReference type="InterPro" id="IPR032828">
    <property type="entry name" value="PolyA_RNA-bd"/>
</dbReference>
<dbReference type="InterPro" id="IPR050124">
    <property type="entry name" value="tRNA_CCA-adding_enzyme"/>
</dbReference>
<dbReference type="NCBIfam" id="NF008137">
    <property type="entry name" value="PRK10885.1"/>
    <property type="match status" value="1"/>
</dbReference>
<dbReference type="PANTHER" id="PTHR47545">
    <property type="entry name" value="MULTIFUNCTIONAL CCA PROTEIN"/>
    <property type="match status" value="1"/>
</dbReference>
<dbReference type="PANTHER" id="PTHR47545:SF1">
    <property type="entry name" value="MULTIFUNCTIONAL CCA PROTEIN"/>
    <property type="match status" value="1"/>
</dbReference>
<dbReference type="Pfam" id="PF01966">
    <property type="entry name" value="HD"/>
    <property type="match status" value="1"/>
</dbReference>
<dbReference type="Pfam" id="PF01743">
    <property type="entry name" value="PolyA_pol"/>
    <property type="match status" value="1"/>
</dbReference>
<dbReference type="Pfam" id="PF12627">
    <property type="entry name" value="PolyA_pol_RNAbd"/>
    <property type="match status" value="1"/>
</dbReference>
<dbReference type="PIRSF" id="PIRSF000813">
    <property type="entry name" value="CCA_bact"/>
    <property type="match status" value="1"/>
</dbReference>
<dbReference type="SUPFAM" id="SSF81301">
    <property type="entry name" value="Nucleotidyltransferase"/>
    <property type="match status" value="1"/>
</dbReference>
<dbReference type="SUPFAM" id="SSF81891">
    <property type="entry name" value="Poly A polymerase C-terminal region-like"/>
    <property type="match status" value="1"/>
</dbReference>
<dbReference type="PROSITE" id="PS51831">
    <property type="entry name" value="HD"/>
    <property type="match status" value="1"/>
</dbReference>
<proteinExistence type="inferred from homology"/>
<accession>Q2NZ41</accession>
<evidence type="ECO:0000255" key="1">
    <source>
        <dbReference type="HAMAP-Rule" id="MF_01261"/>
    </source>
</evidence>
<feature type="chain" id="PRO_1000054309" description="Multifunctional CCA protein">
    <location>
        <begin position="1"/>
        <end position="410"/>
    </location>
</feature>
<feature type="domain" description="HD" evidence="1">
    <location>
        <begin position="229"/>
        <end position="347"/>
    </location>
</feature>
<feature type="binding site" evidence="1">
    <location>
        <position position="8"/>
    </location>
    <ligand>
        <name>ATP</name>
        <dbReference type="ChEBI" id="CHEBI:30616"/>
    </ligand>
</feature>
<feature type="binding site" evidence="1">
    <location>
        <position position="8"/>
    </location>
    <ligand>
        <name>CTP</name>
        <dbReference type="ChEBI" id="CHEBI:37563"/>
    </ligand>
</feature>
<feature type="binding site" evidence="1">
    <location>
        <position position="11"/>
    </location>
    <ligand>
        <name>ATP</name>
        <dbReference type="ChEBI" id="CHEBI:30616"/>
    </ligand>
</feature>
<feature type="binding site" evidence="1">
    <location>
        <position position="11"/>
    </location>
    <ligand>
        <name>CTP</name>
        <dbReference type="ChEBI" id="CHEBI:37563"/>
    </ligand>
</feature>
<feature type="binding site" evidence="1">
    <location>
        <position position="21"/>
    </location>
    <ligand>
        <name>Mg(2+)</name>
        <dbReference type="ChEBI" id="CHEBI:18420"/>
    </ligand>
</feature>
<feature type="binding site" evidence="1">
    <location>
        <position position="23"/>
    </location>
    <ligand>
        <name>Mg(2+)</name>
        <dbReference type="ChEBI" id="CHEBI:18420"/>
    </ligand>
</feature>
<feature type="binding site" evidence="1">
    <location>
        <position position="91"/>
    </location>
    <ligand>
        <name>ATP</name>
        <dbReference type="ChEBI" id="CHEBI:30616"/>
    </ligand>
</feature>
<feature type="binding site" evidence="1">
    <location>
        <position position="91"/>
    </location>
    <ligand>
        <name>CTP</name>
        <dbReference type="ChEBI" id="CHEBI:37563"/>
    </ligand>
</feature>
<feature type="binding site" evidence="1">
    <location>
        <position position="138"/>
    </location>
    <ligand>
        <name>ATP</name>
        <dbReference type="ChEBI" id="CHEBI:30616"/>
    </ligand>
</feature>
<feature type="binding site" evidence="1">
    <location>
        <position position="138"/>
    </location>
    <ligand>
        <name>CTP</name>
        <dbReference type="ChEBI" id="CHEBI:37563"/>
    </ligand>
</feature>
<feature type="binding site" evidence="1">
    <location>
        <position position="141"/>
    </location>
    <ligand>
        <name>ATP</name>
        <dbReference type="ChEBI" id="CHEBI:30616"/>
    </ligand>
</feature>
<feature type="binding site" evidence="1">
    <location>
        <position position="141"/>
    </location>
    <ligand>
        <name>CTP</name>
        <dbReference type="ChEBI" id="CHEBI:37563"/>
    </ligand>
</feature>
<comment type="function">
    <text evidence="1">Catalyzes the addition and repair of the essential 3'-terminal CCA sequence in tRNAs without using a nucleic acid template. Adds these three nucleotides in the order of C, C, and A to the tRNA nucleotide-73, using CTP and ATP as substrates and producing inorganic pyrophosphate. tRNA 3'-terminal CCA addition is required both for tRNA processing and repair. Also involved in tRNA surveillance by mediating tandem CCA addition to generate a CCACCA at the 3' terminus of unstable tRNAs. While stable tRNAs receive only 3'-terminal CCA, unstable tRNAs are marked with CCACCA and rapidly degraded.</text>
</comment>
<comment type="catalytic activity">
    <reaction evidence="1">
        <text>a tRNA precursor + 2 CTP + ATP = a tRNA with a 3' CCA end + 3 diphosphate</text>
        <dbReference type="Rhea" id="RHEA:14433"/>
        <dbReference type="Rhea" id="RHEA-COMP:10465"/>
        <dbReference type="Rhea" id="RHEA-COMP:10468"/>
        <dbReference type="ChEBI" id="CHEBI:30616"/>
        <dbReference type="ChEBI" id="CHEBI:33019"/>
        <dbReference type="ChEBI" id="CHEBI:37563"/>
        <dbReference type="ChEBI" id="CHEBI:74896"/>
        <dbReference type="ChEBI" id="CHEBI:83071"/>
        <dbReference type="EC" id="2.7.7.72"/>
    </reaction>
</comment>
<comment type="catalytic activity">
    <reaction evidence="1">
        <text>a tRNA with a 3' CCA end + 2 CTP + ATP = a tRNA with a 3' CCACCA end + 3 diphosphate</text>
        <dbReference type="Rhea" id="RHEA:76235"/>
        <dbReference type="Rhea" id="RHEA-COMP:10468"/>
        <dbReference type="Rhea" id="RHEA-COMP:18655"/>
        <dbReference type="ChEBI" id="CHEBI:30616"/>
        <dbReference type="ChEBI" id="CHEBI:33019"/>
        <dbReference type="ChEBI" id="CHEBI:37563"/>
        <dbReference type="ChEBI" id="CHEBI:83071"/>
        <dbReference type="ChEBI" id="CHEBI:195187"/>
    </reaction>
    <physiologicalReaction direction="left-to-right" evidence="1">
        <dbReference type="Rhea" id="RHEA:76236"/>
    </physiologicalReaction>
</comment>
<comment type="cofactor">
    <cofactor evidence="1">
        <name>Mg(2+)</name>
        <dbReference type="ChEBI" id="CHEBI:18420"/>
    </cofactor>
    <text evidence="1">Magnesium is required for nucleotidyltransferase activity.</text>
</comment>
<comment type="cofactor">
    <cofactor evidence="1">
        <name>Ni(2+)</name>
        <dbReference type="ChEBI" id="CHEBI:49786"/>
    </cofactor>
    <text evidence="1">Nickel for phosphatase activity.</text>
</comment>
<comment type="subunit">
    <text evidence="1">Monomer. Can also form homodimers and oligomers.</text>
</comment>
<comment type="domain">
    <text evidence="1">Comprises two domains: an N-terminal domain containing the nucleotidyltransferase activity and a C-terminal HD domain associated with both phosphodiesterase and phosphatase activities.</text>
</comment>
<comment type="miscellaneous">
    <text evidence="1">A single active site specifically recognizes both ATP and CTP and is responsible for their addition.</text>
</comment>
<comment type="similarity">
    <text evidence="1">Belongs to the tRNA nucleotidyltransferase/poly(A) polymerase family. Bacterial CCA-adding enzyme type 1 subfamily.</text>
</comment>
<keyword id="KW-0067">ATP-binding</keyword>
<keyword id="KW-0378">Hydrolase</keyword>
<keyword id="KW-0460">Magnesium</keyword>
<keyword id="KW-0479">Metal-binding</keyword>
<keyword id="KW-0511">Multifunctional enzyme</keyword>
<keyword id="KW-0533">Nickel</keyword>
<keyword id="KW-0547">Nucleotide-binding</keyword>
<keyword id="KW-0548">Nucleotidyltransferase</keyword>
<keyword id="KW-0692">RNA repair</keyword>
<keyword id="KW-0694">RNA-binding</keyword>
<keyword id="KW-0808">Transferase</keyword>
<keyword id="KW-0819">tRNA processing</keyword>
<name>CCA_XANOM</name>
<organism>
    <name type="scientific">Xanthomonas oryzae pv. oryzae (strain MAFF 311018)</name>
    <dbReference type="NCBI Taxonomy" id="342109"/>
    <lineage>
        <taxon>Bacteria</taxon>
        <taxon>Pseudomonadati</taxon>
        <taxon>Pseudomonadota</taxon>
        <taxon>Gammaproteobacteria</taxon>
        <taxon>Lysobacterales</taxon>
        <taxon>Lysobacteraceae</taxon>
        <taxon>Xanthomonas</taxon>
    </lineage>
</organism>
<gene>
    <name evidence="1" type="primary">cca</name>
    <name type="ordered locus">XOO3681</name>
</gene>
<reference key="1">
    <citation type="journal article" date="2005" name="Jpn. Agric. Res. Q.">
        <title>Genome sequence of Xanthomonas oryzae pv. oryzae suggests contribution of large numbers of effector genes and insertion sequences to its race diversity.</title>
        <authorList>
            <person name="Ochiai H."/>
            <person name="Inoue Y."/>
            <person name="Takeya M."/>
            <person name="Sasaki A."/>
            <person name="Kaku H."/>
        </authorList>
    </citation>
    <scope>NUCLEOTIDE SEQUENCE [LARGE SCALE GENOMIC DNA]</scope>
    <source>
        <strain>MAFF 311018</strain>
    </source>
</reference>
<protein>
    <recommendedName>
        <fullName evidence="1">Multifunctional CCA protein</fullName>
    </recommendedName>
    <domain>
        <recommendedName>
            <fullName evidence="1">CCA-adding enzyme</fullName>
            <ecNumber evidence="1">2.7.7.72</ecNumber>
        </recommendedName>
        <alternativeName>
            <fullName evidence="1">CCA tRNA nucleotidyltransferase</fullName>
        </alternativeName>
        <alternativeName>
            <fullName evidence="1">tRNA CCA-pyrophosphorylase</fullName>
        </alternativeName>
        <alternativeName>
            <fullName evidence="1">tRNA adenylyl-/cytidylyl-transferase</fullName>
        </alternativeName>
        <alternativeName>
            <fullName evidence="1">tRNA nucleotidyltransferase</fullName>
        </alternativeName>
        <alternativeName>
            <fullName evidence="1">tRNA-NT</fullName>
        </alternativeName>
    </domain>
    <domain>
        <recommendedName>
            <fullName evidence="1">2'-nucleotidase</fullName>
            <ecNumber evidence="1">3.1.3.-</ecNumber>
        </recommendedName>
    </domain>
    <domain>
        <recommendedName>
            <fullName evidence="1">2',3'-cyclic phosphodiesterase</fullName>
            <ecNumber evidence="1">3.1.4.-</ecNumber>
        </recommendedName>
    </domain>
    <domain>
        <recommendedName>
            <fullName evidence="1">Phosphatase</fullName>
            <ecNumber evidence="1">3.1.3.-</ecNumber>
        </recommendedName>
    </domain>
</protein>